<accession>Q505K2</accession>
<accession>Q8BZ23</accession>
<dbReference type="EMBL" id="AC102338">
    <property type="status" value="NOT_ANNOTATED_CDS"/>
    <property type="molecule type" value="Genomic_DNA"/>
</dbReference>
<dbReference type="EMBL" id="BC094511">
    <property type="protein sequence ID" value="AAH94511.1"/>
    <property type="molecule type" value="mRNA"/>
</dbReference>
<dbReference type="EMBL" id="AK036881">
    <property type="protein sequence ID" value="BAC29618.1"/>
    <property type="status" value="ALT_INIT"/>
    <property type="molecule type" value="mRNA"/>
</dbReference>
<dbReference type="CCDS" id="CCDS17442.2"/>
<dbReference type="RefSeq" id="NP_766270.2">
    <property type="nucleotide sequence ID" value="NM_172682.3"/>
</dbReference>
<dbReference type="RefSeq" id="XP_006501396.1">
    <property type="nucleotide sequence ID" value="XM_006501333.3"/>
</dbReference>
<dbReference type="RefSeq" id="XP_011238384.1">
    <property type="nucleotide sequence ID" value="XM_011240082.2"/>
</dbReference>
<dbReference type="SMR" id="Q505K2"/>
<dbReference type="FunCoup" id="Q505K2">
    <property type="interactions" value="155"/>
</dbReference>
<dbReference type="STRING" id="10090.ENSMUSP00000113235"/>
<dbReference type="GlyGen" id="Q505K2">
    <property type="glycosylation" value="1 site"/>
</dbReference>
<dbReference type="iPTMnet" id="Q505K2"/>
<dbReference type="PhosphoSitePlus" id="Q505K2"/>
<dbReference type="PaxDb" id="10090-ENSMUSP00000113235"/>
<dbReference type="PeptideAtlas" id="Q505K2"/>
<dbReference type="ProteomicsDB" id="275973"/>
<dbReference type="Pumba" id="Q505K2"/>
<dbReference type="Antibodypedia" id="48311">
    <property type="antibodies" value="8 antibodies from 7 providers"/>
</dbReference>
<dbReference type="DNASU" id="229488"/>
<dbReference type="Ensembl" id="ENSMUST00000094148.6">
    <property type="protein sequence ID" value="ENSMUSP00000091700.5"/>
    <property type="gene ID" value="ENSMUSG00000051000.18"/>
</dbReference>
<dbReference type="Ensembl" id="ENSMUST00000118408.8">
    <property type="protein sequence ID" value="ENSMUSP00000113235.2"/>
    <property type="gene ID" value="ENSMUSG00000051000.18"/>
</dbReference>
<dbReference type="GeneID" id="229488"/>
<dbReference type="KEGG" id="mmu:229488"/>
<dbReference type="UCSC" id="uc008pqu.2">
    <property type="organism name" value="mouse"/>
</dbReference>
<dbReference type="AGR" id="MGI:2444746"/>
<dbReference type="CTD" id="729830"/>
<dbReference type="MGI" id="MGI:2444746">
    <property type="gene designation" value="Fhip1a"/>
</dbReference>
<dbReference type="VEuPathDB" id="HostDB:ENSMUSG00000051000"/>
<dbReference type="eggNOG" id="KOG3695">
    <property type="taxonomic scope" value="Eukaryota"/>
</dbReference>
<dbReference type="GeneTree" id="ENSGT00950000182936"/>
<dbReference type="HOGENOM" id="CLU_007807_0_0_1"/>
<dbReference type="InParanoid" id="Q505K2"/>
<dbReference type="OMA" id="RMPSLVQ"/>
<dbReference type="OrthoDB" id="6287422at2759"/>
<dbReference type="PhylomeDB" id="Q505K2"/>
<dbReference type="TreeFam" id="TF313941"/>
<dbReference type="BioGRID-ORCS" id="229488">
    <property type="hits" value="2 hits in 77 CRISPR screens"/>
</dbReference>
<dbReference type="ChiTaRS" id="Fam160a1">
    <property type="organism name" value="mouse"/>
</dbReference>
<dbReference type="PRO" id="PR:Q505K2"/>
<dbReference type="Proteomes" id="UP000000589">
    <property type="component" value="Chromosome 3"/>
</dbReference>
<dbReference type="RNAct" id="Q505K2">
    <property type="molecule type" value="protein"/>
</dbReference>
<dbReference type="Bgee" id="ENSMUSG00000051000">
    <property type="expression patterns" value="Expressed in animal zygote and 125 other cell types or tissues"/>
</dbReference>
<dbReference type="ExpressionAtlas" id="Q505K2">
    <property type="expression patterns" value="baseline and differential"/>
</dbReference>
<dbReference type="GO" id="GO:1905719">
    <property type="term" value="P:protein localization to perinuclear region of cytoplasm"/>
    <property type="evidence" value="ECO:0007669"/>
    <property type="project" value="Ensembl"/>
</dbReference>
<dbReference type="InterPro" id="IPR019384">
    <property type="entry name" value="FHIP"/>
</dbReference>
<dbReference type="InterPro" id="IPR045669">
    <property type="entry name" value="FHIP_C"/>
</dbReference>
<dbReference type="InterPro" id="IPR045668">
    <property type="entry name" value="FHIP_KELAA_motif"/>
</dbReference>
<dbReference type="PANTHER" id="PTHR21705:SF6">
    <property type="entry name" value="FHF COMPLEX SUBUNIT HOOK-INTERACTING PROTEIN 1A"/>
    <property type="match status" value="1"/>
</dbReference>
<dbReference type="PANTHER" id="PTHR21705">
    <property type="entry name" value="RAI16 PROTEIN-RELATED"/>
    <property type="match status" value="1"/>
</dbReference>
<dbReference type="Pfam" id="PF19314">
    <property type="entry name" value="DUF5917"/>
    <property type="match status" value="1"/>
</dbReference>
<dbReference type="Pfam" id="PF19311">
    <property type="entry name" value="KELAA"/>
    <property type="match status" value="1"/>
</dbReference>
<dbReference type="Pfam" id="PF10257">
    <property type="entry name" value="RAI16-like"/>
    <property type="match status" value="1"/>
</dbReference>
<feature type="chain" id="PRO_0000319579" description="FHF complex subunit HOOK-interacting protein 1A">
    <location>
        <begin position="1"/>
        <end position="1081"/>
    </location>
</feature>
<feature type="region of interest" description="Disordered" evidence="2">
    <location>
        <begin position="474"/>
        <end position="496"/>
    </location>
</feature>
<feature type="region of interest" description="Disordered" evidence="2">
    <location>
        <begin position="544"/>
        <end position="623"/>
    </location>
</feature>
<feature type="region of interest" description="Disordered" evidence="2">
    <location>
        <begin position="658"/>
        <end position="770"/>
    </location>
</feature>
<feature type="region of interest" description="Disordered" evidence="2">
    <location>
        <begin position="863"/>
        <end position="883"/>
    </location>
</feature>
<feature type="compositionally biased region" description="Pro residues" evidence="2">
    <location>
        <begin position="486"/>
        <end position="496"/>
    </location>
</feature>
<feature type="compositionally biased region" description="Basic and acidic residues" evidence="2">
    <location>
        <begin position="553"/>
        <end position="564"/>
    </location>
</feature>
<feature type="compositionally biased region" description="Polar residues" evidence="2">
    <location>
        <begin position="567"/>
        <end position="576"/>
    </location>
</feature>
<feature type="compositionally biased region" description="Acidic residues" evidence="2">
    <location>
        <begin position="680"/>
        <end position="707"/>
    </location>
</feature>
<feature type="compositionally biased region" description="Polar residues" evidence="2">
    <location>
        <begin position="727"/>
        <end position="738"/>
    </location>
</feature>
<feature type="compositionally biased region" description="Polar residues" evidence="2">
    <location>
        <begin position="746"/>
        <end position="762"/>
    </location>
</feature>
<keyword id="KW-1185">Reference proteome</keyword>
<protein>
    <recommendedName>
        <fullName evidence="4">FHF complex subunit HOOK-interacting protein 1A</fullName>
    </recommendedName>
</protein>
<gene>
    <name evidence="4" type="primary">Fhip1a</name>
    <name evidence="4" type="synonym">Fam160a1</name>
</gene>
<organism>
    <name type="scientific">Mus musculus</name>
    <name type="common">Mouse</name>
    <dbReference type="NCBI Taxonomy" id="10090"/>
    <lineage>
        <taxon>Eukaryota</taxon>
        <taxon>Metazoa</taxon>
        <taxon>Chordata</taxon>
        <taxon>Craniata</taxon>
        <taxon>Vertebrata</taxon>
        <taxon>Euteleostomi</taxon>
        <taxon>Mammalia</taxon>
        <taxon>Eutheria</taxon>
        <taxon>Euarchontoglires</taxon>
        <taxon>Glires</taxon>
        <taxon>Rodentia</taxon>
        <taxon>Myomorpha</taxon>
        <taxon>Muroidea</taxon>
        <taxon>Muridae</taxon>
        <taxon>Murinae</taxon>
        <taxon>Mus</taxon>
        <taxon>Mus</taxon>
    </lineage>
</organism>
<reference key="1">
    <citation type="journal article" date="2009" name="PLoS Biol.">
        <title>Lineage-specific biology revealed by a finished genome assembly of the mouse.</title>
        <authorList>
            <person name="Church D.M."/>
            <person name="Goodstadt L."/>
            <person name="Hillier L.W."/>
            <person name="Zody M.C."/>
            <person name="Goldstein S."/>
            <person name="She X."/>
            <person name="Bult C.J."/>
            <person name="Agarwala R."/>
            <person name="Cherry J.L."/>
            <person name="DiCuccio M."/>
            <person name="Hlavina W."/>
            <person name="Kapustin Y."/>
            <person name="Meric P."/>
            <person name="Maglott D."/>
            <person name="Birtle Z."/>
            <person name="Marques A.C."/>
            <person name="Graves T."/>
            <person name="Zhou S."/>
            <person name="Teague B."/>
            <person name="Potamousis K."/>
            <person name="Churas C."/>
            <person name="Place M."/>
            <person name="Herschleb J."/>
            <person name="Runnheim R."/>
            <person name="Forrest D."/>
            <person name="Amos-Landgraf J."/>
            <person name="Schwartz D.C."/>
            <person name="Cheng Z."/>
            <person name="Lindblad-Toh K."/>
            <person name="Eichler E.E."/>
            <person name="Ponting C.P."/>
        </authorList>
    </citation>
    <scope>NUCLEOTIDE SEQUENCE [LARGE SCALE GENOMIC DNA]</scope>
    <source>
        <strain>C57BL/6J</strain>
    </source>
</reference>
<reference key="2">
    <citation type="journal article" date="2004" name="Genome Res.">
        <title>The status, quality, and expansion of the NIH full-length cDNA project: the Mammalian Gene Collection (MGC).</title>
        <authorList>
            <consortium name="The MGC Project Team"/>
        </authorList>
    </citation>
    <scope>NUCLEOTIDE SEQUENCE [LARGE SCALE MRNA] OF 184-1081</scope>
    <source>
        <strain>FVB/N</strain>
        <tissue>Mammary tumor</tissue>
    </source>
</reference>
<reference key="3">
    <citation type="journal article" date="2005" name="Science">
        <title>The transcriptional landscape of the mammalian genome.</title>
        <authorList>
            <person name="Carninci P."/>
            <person name="Kasukawa T."/>
            <person name="Katayama S."/>
            <person name="Gough J."/>
            <person name="Frith M.C."/>
            <person name="Maeda N."/>
            <person name="Oyama R."/>
            <person name="Ravasi T."/>
            <person name="Lenhard B."/>
            <person name="Wells C."/>
            <person name="Kodzius R."/>
            <person name="Shimokawa K."/>
            <person name="Bajic V.B."/>
            <person name="Brenner S.E."/>
            <person name="Batalov S."/>
            <person name="Forrest A.R."/>
            <person name="Zavolan M."/>
            <person name="Davis M.J."/>
            <person name="Wilming L.G."/>
            <person name="Aidinis V."/>
            <person name="Allen J.E."/>
            <person name="Ambesi-Impiombato A."/>
            <person name="Apweiler R."/>
            <person name="Aturaliya R.N."/>
            <person name="Bailey T.L."/>
            <person name="Bansal M."/>
            <person name="Baxter L."/>
            <person name="Beisel K.W."/>
            <person name="Bersano T."/>
            <person name="Bono H."/>
            <person name="Chalk A.M."/>
            <person name="Chiu K.P."/>
            <person name="Choudhary V."/>
            <person name="Christoffels A."/>
            <person name="Clutterbuck D.R."/>
            <person name="Crowe M.L."/>
            <person name="Dalla E."/>
            <person name="Dalrymple B.P."/>
            <person name="de Bono B."/>
            <person name="Della Gatta G."/>
            <person name="di Bernardo D."/>
            <person name="Down T."/>
            <person name="Engstrom P."/>
            <person name="Fagiolini M."/>
            <person name="Faulkner G."/>
            <person name="Fletcher C.F."/>
            <person name="Fukushima T."/>
            <person name="Furuno M."/>
            <person name="Futaki S."/>
            <person name="Gariboldi M."/>
            <person name="Georgii-Hemming P."/>
            <person name="Gingeras T.R."/>
            <person name="Gojobori T."/>
            <person name="Green R.E."/>
            <person name="Gustincich S."/>
            <person name="Harbers M."/>
            <person name="Hayashi Y."/>
            <person name="Hensch T.K."/>
            <person name="Hirokawa N."/>
            <person name="Hill D."/>
            <person name="Huminiecki L."/>
            <person name="Iacono M."/>
            <person name="Ikeo K."/>
            <person name="Iwama A."/>
            <person name="Ishikawa T."/>
            <person name="Jakt M."/>
            <person name="Kanapin A."/>
            <person name="Katoh M."/>
            <person name="Kawasawa Y."/>
            <person name="Kelso J."/>
            <person name="Kitamura H."/>
            <person name="Kitano H."/>
            <person name="Kollias G."/>
            <person name="Krishnan S.P."/>
            <person name="Kruger A."/>
            <person name="Kummerfeld S.K."/>
            <person name="Kurochkin I.V."/>
            <person name="Lareau L.F."/>
            <person name="Lazarevic D."/>
            <person name="Lipovich L."/>
            <person name="Liu J."/>
            <person name="Liuni S."/>
            <person name="McWilliam S."/>
            <person name="Madan Babu M."/>
            <person name="Madera M."/>
            <person name="Marchionni L."/>
            <person name="Matsuda H."/>
            <person name="Matsuzawa S."/>
            <person name="Miki H."/>
            <person name="Mignone F."/>
            <person name="Miyake S."/>
            <person name="Morris K."/>
            <person name="Mottagui-Tabar S."/>
            <person name="Mulder N."/>
            <person name="Nakano N."/>
            <person name="Nakauchi H."/>
            <person name="Ng P."/>
            <person name="Nilsson R."/>
            <person name="Nishiguchi S."/>
            <person name="Nishikawa S."/>
            <person name="Nori F."/>
            <person name="Ohara O."/>
            <person name="Okazaki Y."/>
            <person name="Orlando V."/>
            <person name="Pang K.C."/>
            <person name="Pavan W.J."/>
            <person name="Pavesi G."/>
            <person name="Pesole G."/>
            <person name="Petrovsky N."/>
            <person name="Piazza S."/>
            <person name="Reed J."/>
            <person name="Reid J.F."/>
            <person name="Ring B.Z."/>
            <person name="Ringwald M."/>
            <person name="Rost B."/>
            <person name="Ruan Y."/>
            <person name="Salzberg S.L."/>
            <person name="Sandelin A."/>
            <person name="Schneider C."/>
            <person name="Schoenbach C."/>
            <person name="Sekiguchi K."/>
            <person name="Semple C.A."/>
            <person name="Seno S."/>
            <person name="Sessa L."/>
            <person name="Sheng Y."/>
            <person name="Shibata Y."/>
            <person name="Shimada H."/>
            <person name="Shimada K."/>
            <person name="Silva D."/>
            <person name="Sinclair B."/>
            <person name="Sperling S."/>
            <person name="Stupka E."/>
            <person name="Sugiura K."/>
            <person name="Sultana R."/>
            <person name="Takenaka Y."/>
            <person name="Taki K."/>
            <person name="Tammoja K."/>
            <person name="Tan S.L."/>
            <person name="Tang S."/>
            <person name="Taylor M.S."/>
            <person name="Tegner J."/>
            <person name="Teichmann S.A."/>
            <person name="Ueda H.R."/>
            <person name="van Nimwegen E."/>
            <person name="Verardo R."/>
            <person name="Wei C.L."/>
            <person name="Yagi K."/>
            <person name="Yamanishi H."/>
            <person name="Zabarovsky E."/>
            <person name="Zhu S."/>
            <person name="Zimmer A."/>
            <person name="Hide W."/>
            <person name="Bult C."/>
            <person name="Grimmond S.M."/>
            <person name="Teasdale R.D."/>
            <person name="Liu E.T."/>
            <person name="Brusic V."/>
            <person name="Quackenbush J."/>
            <person name="Wahlestedt C."/>
            <person name="Mattick J.S."/>
            <person name="Hume D.A."/>
            <person name="Kai C."/>
            <person name="Sasaki D."/>
            <person name="Tomaru Y."/>
            <person name="Fukuda S."/>
            <person name="Kanamori-Katayama M."/>
            <person name="Suzuki M."/>
            <person name="Aoki J."/>
            <person name="Arakawa T."/>
            <person name="Iida J."/>
            <person name="Imamura K."/>
            <person name="Itoh M."/>
            <person name="Kato T."/>
            <person name="Kawaji H."/>
            <person name="Kawagashira N."/>
            <person name="Kawashima T."/>
            <person name="Kojima M."/>
            <person name="Kondo S."/>
            <person name="Konno H."/>
            <person name="Nakano K."/>
            <person name="Ninomiya N."/>
            <person name="Nishio T."/>
            <person name="Okada M."/>
            <person name="Plessy C."/>
            <person name="Shibata K."/>
            <person name="Shiraki T."/>
            <person name="Suzuki S."/>
            <person name="Tagami M."/>
            <person name="Waki K."/>
            <person name="Watahiki A."/>
            <person name="Okamura-Oho Y."/>
            <person name="Suzuki H."/>
            <person name="Kawai J."/>
            <person name="Hayashizaki Y."/>
        </authorList>
    </citation>
    <scope>NUCLEOTIDE SEQUENCE [LARGE SCALE MRNA] OF 259-1081</scope>
    <source>
        <strain>C57BL/6J</strain>
        <tissue>Vagina</tissue>
    </source>
</reference>
<reference key="4">
    <citation type="journal article" date="2010" name="Cell">
        <title>A tissue-specific atlas of mouse protein phosphorylation and expression.</title>
        <authorList>
            <person name="Huttlin E.L."/>
            <person name="Jedrychowski M.P."/>
            <person name="Elias J.E."/>
            <person name="Goswami T."/>
            <person name="Rad R."/>
            <person name="Beausoleil S.A."/>
            <person name="Villen J."/>
            <person name="Haas W."/>
            <person name="Sowa M.E."/>
            <person name="Gygi S.P."/>
        </authorList>
    </citation>
    <scope>IDENTIFICATION BY MASS SPECTROMETRY [LARGE SCALE ANALYSIS]</scope>
    <source>
        <tissue>Pancreas</tissue>
    </source>
</reference>
<sequence>MMSSVSTESKLQQAVSLKGVDPETCMIVFKNHWAQVVKILEKHDPLKNTQAKYGSIPPDEASAVQNYVEHMLFLLIEEQAKDAAMGPILEFVVCENIMEKLFLWSLRREFTDETKLEQLKMYEMLVTQSYQPLLHHKPILKPLMMLLSSCSGTATPAVEGKLVVLLNQLCSILAKDPSILELFFHTSEDQGAANFLIFSLLIPFIHREGTVGQQARDALLFIMSLSAENSMVANHIVENTYFCPVLATGLSGLYSSLPTKLEEKGEDWHCILKDDWLLLPALVQFMNSLEFCNAVIQVAHPLIRTQLVSYIYNGFLVPVLAPALHKVTVEEVMTTTAYLDLFLRSISEPALLEIFLRFILLHRHENVHILDTLTSRINTPFRLCVVSLALFRTLIGLHCEDVMLQLVLRYLVPCNHMMLSQRWAVKERDCYSVSAAKLLALTPVCCASGITLTLGNQERDYILWSKCMHDGSGSEEQLLPETPCSPSSPSPPPPPAPAACIVEYGKALDISYLQYLWEAHTNILHCMRDCRVWSALYDGDSPDPETFLQSLSEESRENSGHPEARLPQQSVRTSGQTKDKSQSELEWDDSYDTGISSGADVGSPGPDDEVETPAPPAPIDPPKHIQEMKKNAILLFKGSYIEESDFQDDVMVYRLCAEKDTEDTTEPQKDTSEPQGDTLEPLEDTSEQQEDTSEQLEDTSELQEDTAEPQGDTADPTAEAQPKLQPEAQSLPTSNGPLSSPDPETESQPSRESSDLCQNTFSEAKPENEPGVALALDSELIATTFEAEPQSELAVVSTESEDFIAQYDQIIQELDSGTEGLTEQSIPISEPSLLTQQEERREECKEEEDDDFDSLMAATPAVEAGSSPFGVGEDTAFSSRHPVRTQSTPFTGPFISVVLSKLENMLENSLHVNLLLIGIITQLASYPQPLLRSFLLNTNMVFQPSVRSLYQVLASVKNKIEQFASVERDFPGLLIQAQQYLLFRVDMSDMAPAALTKDPIQEISRPESDKTLLDGPPRVLQPFLGNRAKVTRAPPNLPLPVKNTMLAAALFPEFLKELAALAQEHSILCYKILGDFEDSCC</sequence>
<evidence type="ECO:0000250" key="1">
    <source>
        <dbReference type="UniProtKB" id="Q05DH4"/>
    </source>
</evidence>
<evidence type="ECO:0000256" key="2">
    <source>
        <dbReference type="SAM" id="MobiDB-lite"/>
    </source>
</evidence>
<evidence type="ECO:0000305" key="3"/>
<evidence type="ECO:0000312" key="4">
    <source>
        <dbReference type="MGI" id="MGI:2444746"/>
    </source>
</evidence>
<proteinExistence type="evidence at protein level"/>
<name>FHI1A_MOUSE</name>
<comment type="function">
    <text evidence="1">Probable component of the FTS/Hook/FHIP complex (FHF complex). FHF complex promotes the distribution of AP-4 complex to the perinuclear area of the cell.</text>
</comment>
<comment type="subunit">
    <text evidence="1">May be a component of the FTS/Hook/FHIP complex (FHF complex), composed of AKTIP/FTS, FHIP1B, and one or more members of the Hook family of proteins HOOK1, HOOK2, and HOOK3. May interact directly with AKTIP/FTS.</text>
</comment>
<comment type="similarity">
    <text evidence="3">Belongs to the FHIP family.</text>
</comment>
<comment type="sequence caution" evidence="3">
    <conflict type="erroneous initiation">
        <sequence resource="EMBL-CDS" id="BAC29618"/>
    </conflict>
    <text>Truncated N-terminus.</text>
</comment>